<gene>
    <name evidence="1" type="primary">rpoZ</name>
    <name type="ordered locus">Spea_3878</name>
</gene>
<dbReference type="EC" id="2.7.7.6" evidence="1"/>
<dbReference type="EMBL" id="CP000851">
    <property type="protein sequence ID" value="ABV89188.1"/>
    <property type="molecule type" value="Genomic_DNA"/>
</dbReference>
<dbReference type="RefSeq" id="WP_012004474.1">
    <property type="nucleotide sequence ID" value="NC_009901.1"/>
</dbReference>
<dbReference type="SMR" id="A8H9F1"/>
<dbReference type="STRING" id="398579.Spea_3878"/>
<dbReference type="KEGG" id="spl:Spea_3878"/>
<dbReference type="eggNOG" id="COG1758">
    <property type="taxonomic scope" value="Bacteria"/>
</dbReference>
<dbReference type="HOGENOM" id="CLU_125406_5_3_6"/>
<dbReference type="OrthoDB" id="9796300at2"/>
<dbReference type="Proteomes" id="UP000002608">
    <property type="component" value="Chromosome"/>
</dbReference>
<dbReference type="GO" id="GO:0000428">
    <property type="term" value="C:DNA-directed RNA polymerase complex"/>
    <property type="evidence" value="ECO:0007669"/>
    <property type="project" value="UniProtKB-KW"/>
</dbReference>
<dbReference type="GO" id="GO:0003677">
    <property type="term" value="F:DNA binding"/>
    <property type="evidence" value="ECO:0007669"/>
    <property type="project" value="UniProtKB-UniRule"/>
</dbReference>
<dbReference type="GO" id="GO:0003899">
    <property type="term" value="F:DNA-directed RNA polymerase activity"/>
    <property type="evidence" value="ECO:0007669"/>
    <property type="project" value="UniProtKB-UniRule"/>
</dbReference>
<dbReference type="GO" id="GO:0006351">
    <property type="term" value="P:DNA-templated transcription"/>
    <property type="evidence" value="ECO:0007669"/>
    <property type="project" value="UniProtKB-UniRule"/>
</dbReference>
<dbReference type="Gene3D" id="3.90.940.10">
    <property type="match status" value="1"/>
</dbReference>
<dbReference type="HAMAP" id="MF_00366">
    <property type="entry name" value="RNApol_bact_RpoZ"/>
    <property type="match status" value="1"/>
</dbReference>
<dbReference type="InterPro" id="IPR003716">
    <property type="entry name" value="DNA-dir_RNA_pol_omega"/>
</dbReference>
<dbReference type="InterPro" id="IPR006110">
    <property type="entry name" value="Pol_omega/Rpo6/RPB6"/>
</dbReference>
<dbReference type="InterPro" id="IPR036161">
    <property type="entry name" value="RPB6/omega-like_sf"/>
</dbReference>
<dbReference type="NCBIfam" id="TIGR00690">
    <property type="entry name" value="rpoZ"/>
    <property type="match status" value="1"/>
</dbReference>
<dbReference type="PANTHER" id="PTHR34476">
    <property type="entry name" value="DNA-DIRECTED RNA POLYMERASE SUBUNIT OMEGA"/>
    <property type="match status" value="1"/>
</dbReference>
<dbReference type="PANTHER" id="PTHR34476:SF1">
    <property type="entry name" value="DNA-DIRECTED RNA POLYMERASE SUBUNIT OMEGA"/>
    <property type="match status" value="1"/>
</dbReference>
<dbReference type="Pfam" id="PF01192">
    <property type="entry name" value="RNA_pol_Rpb6"/>
    <property type="match status" value="1"/>
</dbReference>
<dbReference type="SMART" id="SM01409">
    <property type="entry name" value="RNA_pol_Rpb6"/>
    <property type="match status" value="1"/>
</dbReference>
<dbReference type="SUPFAM" id="SSF63562">
    <property type="entry name" value="RPB6/omega subunit-like"/>
    <property type="match status" value="1"/>
</dbReference>
<organism>
    <name type="scientific">Shewanella pealeana (strain ATCC 700345 / ANG-SQ1)</name>
    <dbReference type="NCBI Taxonomy" id="398579"/>
    <lineage>
        <taxon>Bacteria</taxon>
        <taxon>Pseudomonadati</taxon>
        <taxon>Pseudomonadota</taxon>
        <taxon>Gammaproteobacteria</taxon>
        <taxon>Alteromonadales</taxon>
        <taxon>Shewanellaceae</taxon>
        <taxon>Shewanella</taxon>
    </lineage>
</organism>
<sequence>MARVTVEDAVNQIGNRFDMILVAARRARQIAVQGKDPMVEEENDKPTVIALREIELGLVTADTLDADERQTVREREAAEIAAVAAIAEGRNNVI</sequence>
<proteinExistence type="inferred from homology"/>
<comment type="function">
    <text evidence="1">Promotes RNA polymerase assembly. Latches the N- and C-terminal regions of the beta' subunit thereby facilitating its interaction with the beta and alpha subunits.</text>
</comment>
<comment type="catalytic activity">
    <reaction evidence="1">
        <text>RNA(n) + a ribonucleoside 5'-triphosphate = RNA(n+1) + diphosphate</text>
        <dbReference type="Rhea" id="RHEA:21248"/>
        <dbReference type="Rhea" id="RHEA-COMP:14527"/>
        <dbReference type="Rhea" id="RHEA-COMP:17342"/>
        <dbReference type="ChEBI" id="CHEBI:33019"/>
        <dbReference type="ChEBI" id="CHEBI:61557"/>
        <dbReference type="ChEBI" id="CHEBI:140395"/>
        <dbReference type="EC" id="2.7.7.6"/>
    </reaction>
</comment>
<comment type="subunit">
    <text evidence="1">The RNAP catalytic core consists of 2 alpha, 1 beta, 1 beta' and 1 omega subunit. When a sigma factor is associated with the core the holoenzyme is formed, which can initiate transcription.</text>
</comment>
<comment type="similarity">
    <text evidence="1">Belongs to the RNA polymerase subunit omega family.</text>
</comment>
<feature type="chain" id="PRO_1000079648" description="DNA-directed RNA polymerase subunit omega">
    <location>
        <begin position="1"/>
        <end position="94"/>
    </location>
</feature>
<evidence type="ECO:0000255" key="1">
    <source>
        <dbReference type="HAMAP-Rule" id="MF_00366"/>
    </source>
</evidence>
<name>RPOZ_SHEPA</name>
<reference key="1">
    <citation type="submission" date="2007-10" db="EMBL/GenBank/DDBJ databases">
        <title>Complete sequence of Shewanella pealeana ATCC 700345.</title>
        <authorList>
            <consortium name="US DOE Joint Genome Institute"/>
            <person name="Copeland A."/>
            <person name="Lucas S."/>
            <person name="Lapidus A."/>
            <person name="Barry K."/>
            <person name="Glavina del Rio T."/>
            <person name="Dalin E."/>
            <person name="Tice H."/>
            <person name="Pitluck S."/>
            <person name="Chertkov O."/>
            <person name="Brettin T."/>
            <person name="Bruce D."/>
            <person name="Detter J.C."/>
            <person name="Han C."/>
            <person name="Schmutz J."/>
            <person name="Larimer F."/>
            <person name="Land M."/>
            <person name="Hauser L."/>
            <person name="Kyrpides N."/>
            <person name="Kim E."/>
            <person name="Zhao J.-S.Z."/>
            <person name="Manno D."/>
            <person name="Hawari J."/>
            <person name="Richardson P."/>
        </authorList>
    </citation>
    <scope>NUCLEOTIDE SEQUENCE [LARGE SCALE GENOMIC DNA]</scope>
    <source>
        <strain>ATCC 700345 / ANG-SQ1</strain>
    </source>
</reference>
<protein>
    <recommendedName>
        <fullName evidence="1">DNA-directed RNA polymerase subunit omega</fullName>
        <shortName evidence="1">RNAP omega subunit</shortName>
        <ecNumber evidence="1">2.7.7.6</ecNumber>
    </recommendedName>
    <alternativeName>
        <fullName evidence="1">RNA polymerase omega subunit</fullName>
    </alternativeName>
    <alternativeName>
        <fullName evidence="1">Transcriptase subunit omega</fullName>
    </alternativeName>
</protein>
<keyword id="KW-0240">DNA-directed RNA polymerase</keyword>
<keyword id="KW-0548">Nucleotidyltransferase</keyword>
<keyword id="KW-1185">Reference proteome</keyword>
<keyword id="KW-0804">Transcription</keyword>
<keyword id="KW-0808">Transferase</keyword>
<accession>A8H9F1</accession>